<proteinExistence type="evidence at protein level"/>
<feature type="chain" id="PRO_0000071733" description="A-type ATP synthase subunit K">
    <location>
        <begin position="1"/>
        <end position="101"/>
    </location>
</feature>
<feature type="transmembrane region" description="Helical" evidence="2">
    <location>
        <begin position="5"/>
        <end position="25"/>
    </location>
</feature>
<feature type="transmembrane region" description="Helical" evidence="2">
    <location>
        <begin position="37"/>
        <end position="57"/>
    </location>
</feature>
<feature type="transmembrane region" description="Helical" evidence="2">
    <location>
        <begin position="75"/>
        <end position="95"/>
    </location>
</feature>
<sequence length="101" mass="10362">MKKTWLPFLLLPLLVSATIFSAQAPYDTAQGFEGLNIGAGLAIGLAAIGAGVAVGMAAAAGIGVLTERRDMFGTILIFVAIGEGIAVYGILFAVLMLFGKF</sequence>
<evidence type="ECO:0000250" key="1">
    <source>
        <dbReference type="UniProtKB" id="Q57674"/>
    </source>
</evidence>
<evidence type="ECO:0000255" key="2"/>
<evidence type="ECO:0000269" key="3">
    <source>
    </source>
</evidence>
<evidence type="ECO:0000303" key="4">
    <source>
    </source>
</evidence>
<evidence type="ECO:0000305" key="5"/>
<evidence type="ECO:0000305" key="6">
    <source>
    </source>
</evidence>
<evidence type="ECO:0000312" key="7">
    <source>
        <dbReference type="EMBL" id="AAA72703.1"/>
    </source>
</evidence>
<evidence type="ECO:0000312" key="8">
    <source>
        <dbReference type="EMBL" id="BAK54576.1"/>
    </source>
</evidence>
<protein>
    <recommendedName>
        <fullName evidence="5">A-type ATP synthase subunit K</fullName>
    </recommendedName>
    <alternativeName>
        <fullName evidence="7">ATP synthase P subunit</fullName>
    </alternativeName>
    <alternativeName>
        <fullName evidence="4">ATPase proteolipid subunit</fullName>
    </alternativeName>
</protein>
<organism>
    <name type="scientific">Sulfurisphaera tokodaii (strain DSM 16993 / JCM 10545 / NBRC 100140 / 7)</name>
    <name type="common">Sulfolobus tokodaii</name>
    <dbReference type="NCBI Taxonomy" id="273063"/>
    <lineage>
        <taxon>Archaea</taxon>
        <taxon>Thermoproteota</taxon>
        <taxon>Thermoprotei</taxon>
        <taxon>Sulfolobales</taxon>
        <taxon>Sulfolobaceae</taxon>
        <taxon>Sulfurisphaera</taxon>
    </lineage>
</organism>
<reference key="1">
    <citation type="journal article" date="1989" name="J. Biol. Chem.">
        <title>A gene encoding the proteolipid subunit of Sulfolobus acidocaldarius ATPase complex.</title>
        <authorList>
            <person name="Denda K."/>
            <person name="Konishi J."/>
            <person name="Oshima T."/>
            <person name="Date T."/>
            <person name="Yoshida M."/>
        </authorList>
    </citation>
    <scope>NUCLEOTIDE SEQUENCE [GENOMIC DNA]</scope>
    <scope>PROTEIN SEQUENCE OF 57-70; 72-82 AND 97-101</scope>
    <scope>SUBCELLULAR LOCATION</scope>
</reference>
<reference key="2">
    <citation type="journal article" date="2001" name="DNA Res.">
        <title>Complete genome sequence of an aerobic thermoacidophilic Crenarchaeon, Sulfolobus tokodaii strain7.</title>
        <authorList>
            <person name="Kawarabayasi Y."/>
            <person name="Hino Y."/>
            <person name="Horikawa H."/>
            <person name="Jin-no K."/>
            <person name="Takahashi M."/>
            <person name="Sekine M."/>
            <person name="Baba S."/>
            <person name="Ankai A."/>
            <person name="Kosugi H."/>
            <person name="Hosoyama A."/>
            <person name="Fukui S."/>
            <person name="Nagai Y."/>
            <person name="Nishijima K."/>
            <person name="Otsuka R."/>
            <person name="Nakazawa H."/>
            <person name="Takamiya M."/>
            <person name="Kato Y."/>
            <person name="Yoshizawa T."/>
            <person name="Tanaka T."/>
            <person name="Kudoh Y."/>
            <person name="Yamazaki J."/>
            <person name="Kushida N."/>
            <person name="Oguchi A."/>
            <person name="Aoki K."/>
            <person name="Masuda S."/>
            <person name="Yanagii M."/>
            <person name="Nishimura M."/>
            <person name="Yamagishi A."/>
            <person name="Oshima T."/>
            <person name="Kikuchi H."/>
        </authorList>
    </citation>
    <scope>NUCLEOTIDE SEQUENCE [LARGE SCALE GENOMIC DNA]</scope>
    <source>
        <strain>DSM 16993 / JCM 10545 / NBRC 100140 / 7</strain>
    </source>
</reference>
<comment type="function">
    <text evidence="1">Component of the A-type ATP synthase that produces ATP from ADP in the presence of a proton gradient across the membrane.</text>
</comment>
<comment type="subunit">
    <text evidence="1">Has multiple subunits with at least A(3), B(3), C, D, E, F, H, I and proteolipid K(x).</text>
</comment>
<comment type="subcellular location">
    <subcellularLocation>
        <location evidence="3">Cell membrane</location>
        <topology evidence="6">Multi-pass membrane protein</topology>
    </subcellularLocation>
</comment>
<comment type="PTM">
    <text evidence="3">The N-terminus is blocked.</text>
</comment>
<comment type="similarity">
    <text evidence="5">Belongs to the V-ATPase proteolipid subunit family.</text>
</comment>
<comment type="caution">
    <text evidence="6">Was originally reported as originating from S.acidocaldarius.</text>
</comment>
<accession>P62021</accession>
<accession>F9VND0</accession>
<accession>P23040</accession>
<accession>P62020</accession>
<name>AATK_SULTO</name>
<gene>
    <name evidence="1" type="primary">atpK</name>
    <name evidence="8" type="synonym">atpP</name>
    <name type="ordered locus">STK_14390</name>
</gene>
<keyword id="KW-0067">ATP-binding</keyword>
<keyword id="KW-1003">Cell membrane</keyword>
<keyword id="KW-0903">Direct protein sequencing</keyword>
<keyword id="KW-0375">Hydrogen ion transport</keyword>
<keyword id="KW-0378">Hydrolase</keyword>
<keyword id="KW-0406">Ion transport</keyword>
<keyword id="KW-0446">Lipid-binding</keyword>
<keyword id="KW-0472">Membrane</keyword>
<keyword id="KW-0547">Nucleotide-binding</keyword>
<keyword id="KW-1185">Reference proteome</keyword>
<keyword id="KW-0812">Transmembrane</keyword>
<keyword id="KW-1133">Transmembrane helix</keyword>
<keyword id="KW-0813">Transport</keyword>
<dbReference type="EMBL" id="AH003164">
    <property type="protein sequence ID" value="AAA72703.1"/>
    <property type="molecule type" value="Genomic_DNA"/>
</dbReference>
<dbReference type="EMBL" id="BA000023">
    <property type="protein sequence ID" value="BAK54576.1"/>
    <property type="molecule type" value="Genomic_DNA"/>
</dbReference>
<dbReference type="PIR" id="A33351">
    <property type="entry name" value="A33351"/>
</dbReference>
<dbReference type="RefSeq" id="WP_010979485.1">
    <property type="nucleotide sequence ID" value="NC_003106.2"/>
</dbReference>
<dbReference type="SMR" id="P62021"/>
<dbReference type="STRING" id="273063.STK_14390"/>
<dbReference type="GeneID" id="1459471"/>
<dbReference type="KEGG" id="sto:STK_14390"/>
<dbReference type="PATRIC" id="fig|273063.9.peg.1640"/>
<dbReference type="eggNOG" id="arCOG02455">
    <property type="taxonomic scope" value="Archaea"/>
</dbReference>
<dbReference type="OrthoDB" id="37215at2157"/>
<dbReference type="Proteomes" id="UP000001015">
    <property type="component" value="Chromosome"/>
</dbReference>
<dbReference type="GO" id="GO:0005886">
    <property type="term" value="C:plasma membrane"/>
    <property type="evidence" value="ECO:0007669"/>
    <property type="project" value="UniProtKB-SubCell"/>
</dbReference>
<dbReference type="GO" id="GO:0033179">
    <property type="term" value="C:proton-transporting V-type ATPase, V0 domain"/>
    <property type="evidence" value="ECO:0007669"/>
    <property type="project" value="InterPro"/>
</dbReference>
<dbReference type="GO" id="GO:0005524">
    <property type="term" value="F:ATP binding"/>
    <property type="evidence" value="ECO:0007669"/>
    <property type="project" value="UniProtKB-KW"/>
</dbReference>
<dbReference type="GO" id="GO:0016787">
    <property type="term" value="F:hydrolase activity"/>
    <property type="evidence" value="ECO:0007669"/>
    <property type="project" value="UniProtKB-KW"/>
</dbReference>
<dbReference type="GO" id="GO:0008289">
    <property type="term" value="F:lipid binding"/>
    <property type="evidence" value="ECO:0007669"/>
    <property type="project" value="UniProtKB-KW"/>
</dbReference>
<dbReference type="GO" id="GO:0046961">
    <property type="term" value="F:proton-transporting ATPase activity, rotational mechanism"/>
    <property type="evidence" value="ECO:0007669"/>
    <property type="project" value="InterPro"/>
</dbReference>
<dbReference type="CDD" id="cd18120">
    <property type="entry name" value="ATP-synt_Vo_Ao_c"/>
    <property type="match status" value="1"/>
</dbReference>
<dbReference type="Gene3D" id="1.20.120.610">
    <property type="entry name" value="lithium bound rotor ring of v- atpase"/>
    <property type="match status" value="1"/>
</dbReference>
<dbReference type="InterPro" id="IPR002379">
    <property type="entry name" value="ATPase_proteolipid_c-like_dom"/>
</dbReference>
<dbReference type="InterPro" id="IPR000245">
    <property type="entry name" value="ATPase_proteolipid_csu"/>
</dbReference>
<dbReference type="InterPro" id="IPR035921">
    <property type="entry name" value="F/V-ATP_Csub_sf"/>
</dbReference>
<dbReference type="NCBIfam" id="NF004888">
    <property type="entry name" value="PRK06251.1"/>
    <property type="match status" value="1"/>
</dbReference>
<dbReference type="Pfam" id="PF00137">
    <property type="entry name" value="ATP-synt_C"/>
    <property type="match status" value="1"/>
</dbReference>
<dbReference type="PRINTS" id="PR00122">
    <property type="entry name" value="VACATPASE"/>
</dbReference>
<dbReference type="SUPFAM" id="SSF81333">
    <property type="entry name" value="F1F0 ATP synthase subunit C"/>
    <property type="match status" value="1"/>
</dbReference>